<keyword id="KW-1185">Reference proteome</keyword>
<gene>
    <name type="ordered locus">Pden_2174</name>
</gene>
<evidence type="ECO:0000255" key="1">
    <source>
        <dbReference type="HAMAP-Rule" id="MF_00634"/>
    </source>
</evidence>
<feature type="chain" id="PRO_1000082643" description="UPF0235 protein Pden_2174">
    <location>
        <begin position="1"/>
        <end position="82"/>
    </location>
</feature>
<name>Y2174_PARDP</name>
<comment type="similarity">
    <text evidence="1">Belongs to the UPF0235 family.</text>
</comment>
<organism>
    <name type="scientific">Paracoccus denitrificans (strain Pd 1222)</name>
    <dbReference type="NCBI Taxonomy" id="318586"/>
    <lineage>
        <taxon>Bacteria</taxon>
        <taxon>Pseudomonadati</taxon>
        <taxon>Pseudomonadota</taxon>
        <taxon>Alphaproteobacteria</taxon>
        <taxon>Rhodobacterales</taxon>
        <taxon>Paracoccaceae</taxon>
        <taxon>Paracoccus</taxon>
    </lineage>
</organism>
<proteinExistence type="inferred from homology"/>
<dbReference type="EMBL" id="CP000489">
    <property type="protein sequence ID" value="ABL70266.1"/>
    <property type="molecule type" value="Genomic_DNA"/>
</dbReference>
<dbReference type="RefSeq" id="WP_011748461.1">
    <property type="nucleotide sequence ID" value="NC_008686.1"/>
</dbReference>
<dbReference type="SMR" id="A1B422"/>
<dbReference type="STRING" id="318586.Pden_2174"/>
<dbReference type="EnsemblBacteria" id="ABL70266">
    <property type="protein sequence ID" value="ABL70266"/>
    <property type="gene ID" value="Pden_2174"/>
</dbReference>
<dbReference type="GeneID" id="93450571"/>
<dbReference type="KEGG" id="pde:Pden_2174"/>
<dbReference type="eggNOG" id="COG1872">
    <property type="taxonomic scope" value="Bacteria"/>
</dbReference>
<dbReference type="HOGENOM" id="CLU_130694_3_2_5"/>
<dbReference type="OrthoDB" id="3176309at2"/>
<dbReference type="Proteomes" id="UP000000361">
    <property type="component" value="Chromosome 1"/>
</dbReference>
<dbReference type="GO" id="GO:0005737">
    <property type="term" value="C:cytoplasm"/>
    <property type="evidence" value="ECO:0007669"/>
    <property type="project" value="TreeGrafter"/>
</dbReference>
<dbReference type="Gene3D" id="3.30.1200.10">
    <property type="entry name" value="YggU-like"/>
    <property type="match status" value="1"/>
</dbReference>
<dbReference type="HAMAP" id="MF_00634">
    <property type="entry name" value="UPF0235"/>
    <property type="match status" value="1"/>
</dbReference>
<dbReference type="InterPro" id="IPR003746">
    <property type="entry name" value="DUF167"/>
</dbReference>
<dbReference type="InterPro" id="IPR036591">
    <property type="entry name" value="YggU-like_sf"/>
</dbReference>
<dbReference type="NCBIfam" id="TIGR00251">
    <property type="entry name" value="DUF167 family protein"/>
    <property type="match status" value="1"/>
</dbReference>
<dbReference type="PANTHER" id="PTHR13420">
    <property type="entry name" value="UPF0235 PROTEIN C15ORF40"/>
    <property type="match status" value="1"/>
</dbReference>
<dbReference type="PANTHER" id="PTHR13420:SF7">
    <property type="entry name" value="UPF0235 PROTEIN C15ORF40"/>
    <property type="match status" value="1"/>
</dbReference>
<dbReference type="Pfam" id="PF02594">
    <property type="entry name" value="DUF167"/>
    <property type="match status" value="1"/>
</dbReference>
<dbReference type="SMART" id="SM01152">
    <property type="entry name" value="DUF167"/>
    <property type="match status" value="1"/>
</dbReference>
<dbReference type="SUPFAM" id="SSF69786">
    <property type="entry name" value="YggU-like"/>
    <property type="match status" value="1"/>
</dbReference>
<reference key="1">
    <citation type="submission" date="2006-12" db="EMBL/GenBank/DDBJ databases">
        <title>Complete sequence of chromosome 1 of Paracoccus denitrificans PD1222.</title>
        <authorList>
            <person name="Copeland A."/>
            <person name="Lucas S."/>
            <person name="Lapidus A."/>
            <person name="Barry K."/>
            <person name="Detter J.C."/>
            <person name="Glavina del Rio T."/>
            <person name="Hammon N."/>
            <person name="Israni S."/>
            <person name="Dalin E."/>
            <person name="Tice H."/>
            <person name="Pitluck S."/>
            <person name="Munk A.C."/>
            <person name="Brettin T."/>
            <person name="Bruce D."/>
            <person name="Han C."/>
            <person name="Tapia R."/>
            <person name="Gilna P."/>
            <person name="Schmutz J."/>
            <person name="Larimer F."/>
            <person name="Land M."/>
            <person name="Hauser L."/>
            <person name="Kyrpides N."/>
            <person name="Lykidis A."/>
            <person name="Spiro S."/>
            <person name="Richardson D.J."/>
            <person name="Moir J.W.B."/>
            <person name="Ferguson S.J."/>
            <person name="van Spanning R.J.M."/>
            <person name="Richardson P."/>
        </authorList>
    </citation>
    <scope>NUCLEOTIDE SEQUENCE [LARGE SCALE GENOMIC DNA]</scope>
    <source>
        <strain>Pd 1222</strain>
    </source>
</reference>
<protein>
    <recommendedName>
        <fullName evidence="1">UPF0235 protein Pden_2174</fullName>
    </recommendedName>
</protein>
<accession>A1B422</accession>
<sequence>MTDLSHLARPGAEIAVRVTPRASRNAVILDGEAIRVTVTTVPEDGKANAAVVKLLAKALGVAKSRLVLVRGATARDKLFRID</sequence>